<sequence length="126" mass="14062">MNELGRHILAEIYGCDGEILNNKDFIEKIMVDSALKAGAEVREVAFHKFSPQGISGVVIISESHLTIHTWPELGYAAVDVFTCGDRINPWDACNYMTEKFNAKNMTATEIKRGIFEQVVEVKASNI</sequence>
<keyword id="KW-0068">Autocatalytic cleavage</keyword>
<keyword id="KW-0210">Decarboxylase</keyword>
<keyword id="KW-0456">Lyase</keyword>
<keyword id="KW-0620">Polyamine biosynthesis</keyword>
<keyword id="KW-0670">Pyruvate</keyword>
<keyword id="KW-0949">S-adenosyl-L-methionine</keyword>
<keyword id="KW-0704">Schiff base</keyword>
<keyword id="KW-0745">Spermidine biosynthesis</keyword>
<keyword id="KW-0865">Zymogen</keyword>
<gene>
    <name evidence="1" type="primary">speH</name>
    <name type="ordered locus">CKR_1458</name>
</gene>
<accession>B9E1Y4</accession>
<name>SPEH_CLOK1</name>
<feature type="chain" id="PRO_1000193187" description="S-adenosylmethionine decarboxylase beta chain" evidence="1">
    <location>
        <begin position="1"/>
        <end position="62"/>
    </location>
</feature>
<feature type="chain" id="PRO_1000193188" description="S-adenosylmethionine decarboxylase alpha chain" evidence="1">
    <location>
        <begin position="63"/>
        <end position="126"/>
    </location>
</feature>
<feature type="active site" description="Schiff-base intermediate with substrate; via pyruvic acid" evidence="1">
    <location>
        <position position="63"/>
    </location>
</feature>
<feature type="active site" description="Proton acceptor; for processing activity" evidence="1">
    <location>
        <position position="68"/>
    </location>
</feature>
<feature type="active site" description="Proton donor; for catalytic activity" evidence="1">
    <location>
        <position position="83"/>
    </location>
</feature>
<feature type="site" description="Cleavage (non-hydrolytic); by autolysis" evidence="1">
    <location>
        <begin position="62"/>
        <end position="63"/>
    </location>
</feature>
<feature type="modified residue" description="Pyruvic acid (Ser); by autocatalysis" evidence="1">
    <location>
        <position position="63"/>
    </location>
</feature>
<dbReference type="EC" id="4.1.1.50" evidence="1"/>
<dbReference type="EMBL" id="AP009049">
    <property type="protein sequence ID" value="BAH06509.1"/>
    <property type="molecule type" value="Genomic_DNA"/>
</dbReference>
<dbReference type="RefSeq" id="WP_012101961.1">
    <property type="nucleotide sequence ID" value="NC_011837.1"/>
</dbReference>
<dbReference type="SMR" id="B9E1Y4"/>
<dbReference type="KEGG" id="ckr:CKR_1458"/>
<dbReference type="HOGENOM" id="CLU_125470_2_3_9"/>
<dbReference type="UniPathway" id="UPA00331">
    <property type="reaction ID" value="UER00451"/>
</dbReference>
<dbReference type="Proteomes" id="UP000007969">
    <property type="component" value="Chromosome"/>
</dbReference>
<dbReference type="GO" id="GO:0005829">
    <property type="term" value="C:cytosol"/>
    <property type="evidence" value="ECO:0007669"/>
    <property type="project" value="TreeGrafter"/>
</dbReference>
<dbReference type="GO" id="GO:0004014">
    <property type="term" value="F:adenosylmethionine decarboxylase activity"/>
    <property type="evidence" value="ECO:0007669"/>
    <property type="project" value="UniProtKB-UniRule"/>
</dbReference>
<dbReference type="GO" id="GO:0008295">
    <property type="term" value="P:spermidine biosynthetic process"/>
    <property type="evidence" value="ECO:0007669"/>
    <property type="project" value="UniProtKB-UniRule"/>
</dbReference>
<dbReference type="FunFam" id="3.30.360.110:FF:000001">
    <property type="entry name" value="S-adenosylmethionine decarboxylase proenzyme"/>
    <property type="match status" value="1"/>
</dbReference>
<dbReference type="Gene3D" id="3.30.160.750">
    <property type="match status" value="1"/>
</dbReference>
<dbReference type="Gene3D" id="3.30.360.110">
    <property type="entry name" value="S-adenosylmethionine decarboxylase domain"/>
    <property type="match status" value="1"/>
</dbReference>
<dbReference type="HAMAP" id="MF_00464">
    <property type="entry name" value="AdoMetDC_1"/>
    <property type="match status" value="1"/>
</dbReference>
<dbReference type="InterPro" id="IPR042286">
    <property type="entry name" value="AdoMetDC_C"/>
</dbReference>
<dbReference type="InterPro" id="IPR003826">
    <property type="entry name" value="AdoMetDC_fam_prok"/>
</dbReference>
<dbReference type="InterPro" id="IPR042284">
    <property type="entry name" value="AdoMetDC_N"/>
</dbReference>
<dbReference type="InterPro" id="IPR016067">
    <property type="entry name" value="S-AdoMet_deCO2ase_core"/>
</dbReference>
<dbReference type="InterPro" id="IPR017716">
    <property type="entry name" value="S-AdoMet_deCOase_pro-enz"/>
</dbReference>
<dbReference type="NCBIfam" id="TIGR03330">
    <property type="entry name" value="SAM_DCase_Bsu"/>
    <property type="match status" value="1"/>
</dbReference>
<dbReference type="PANTHER" id="PTHR33866">
    <property type="entry name" value="S-ADENOSYLMETHIONINE DECARBOXYLASE PROENZYME"/>
    <property type="match status" value="1"/>
</dbReference>
<dbReference type="PANTHER" id="PTHR33866:SF2">
    <property type="entry name" value="S-ADENOSYLMETHIONINE DECARBOXYLASE PROENZYME"/>
    <property type="match status" value="1"/>
</dbReference>
<dbReference type="Pfam" id="PF02675">
    <property type="entry name" value="AdoMet_dc"/>
    <property type="match status" value="1"/>
</dbReference>
<dbReference type="SUPFAM" id="SSF56276">
    <property type="entry name" value="S-adenosylmethionine decarboxylase"/>
    <property type="match status" value="1"/>
</dbReference>
<evidence type="ECO:0000255" key="1">
    <source>
        <dbReference type="HAMAP-Rule" id="MF_00464"/>
    </source>
</evidence>
<reference key="1">
    <citation type="submission" date="2005-09" db="EMBL/GenBank/DDBJ databases">
        <title>Complete genome sequence of Clostridium kluyveri and comparative genomics of Clostridia species.</title>
        <authorList>
            <person name="Inui M."/>
            <person name="Nonaka H."/>
            <person name="Shinoda Y."/>
            <person name="Ikenaga Y."/>
            <person name="Abe M."/>
            <person name="Naito K."/>
            <person name="Vertes A.A."/>
            <person name="Yukawa H."/>
        </authorList>
    </citation>
    <scope>NUCLEOTIDE SEQUENCE [LARGE SCALE GENOMIC DNA]</scope>
    <source>
        <strain>NBRC 12016</strain>
    </source>
</reference>
<organism>
    <name type="scientific">Clostridium kluyveri (strain NBRC 12016)</name>
    <dbReference type="NCBI Taxonomy" id="583346"/>
    <lineage>
        <taxon>Bacteria</taxon>
        <taxon>Bacillati</taxon>
        <taxon>Bacillota</taxon>
        <taxon>Clostridia</taxon>
        <taxon>Eubacteriales</taxon>
        <taxon>Clostridiaceae</taxon>
        <taxon>Clostridium</taxon>
    </lineage>
</organism>
<proteinExistence type="inferred from homology"/>
<comment type="function">
    <text evidence="1">Catalyzes the decarboxylation of S-adenosylmethionine to S-adenosylmethioninamine (dcAdoMet), the propylamine donor required for the synthesis of the polyamines spermine and spermidine from the diamine putrescine.</text>
</comment>
<comment type="catalytic activity">
    <reaction evidence="1">
        <text>S-adenosyl-L-methionine + H(+) = S-adenosyl 3-(methylsulfanyl)propylamine + CO2</text>
        <dbReference type="Rhea" id="RHEA:15981"/>
        <dbReference type="ChEBI" id="CHEBI:15378"/>
        <dbReference type="ChEBI" id="CHEBI:16526"/>
        <dbReference type="ChEBI" id="CHEBI:57443"/>
        <dbReference type="ChEBI" id="CHEBI:59789"/>
        <dbReference type="EC" id="4.1.1.50"/>
    </reaction>
</comment>
<comment type="cofactor">
    <cofactor evidence="1">
        <name>pyruvate</name>
        <dbReference type="ChEBI" id="CHEBI:15361"/>
    </cofactor>
    <text evidence="1">Binds 1 pyruvoyl group covalently per subunit.</text>
</comment>
<comment type="pathway">
    <text evidence="1">Amine and polyamine biosynthesis; S-adenosylmethioninamine biosynthesis; S-adenosylmethioninamine from S-adenosyl-L-methionine: step 1/1.</text>
</comment>
<comment type="subunit">
    <text evidence="1">Heterotetramer of two alpha and two beta chains arranged as a dimer of alpha/beta heterodimers.</text>
</comment>
<comment type="PTM">
    <text evidence="1">Is synthesized initially as an inactive proenzyme. Formation of the active enzyme involves a self-maturation process in which the active site pyruvoyl group is generated from an internal serine residue via an autocatalytic post-translational modification. Two non-identical subunits are generated from the proenzyme in this reaction, and the pyruvate is formed at the N-terminus of the alpha chain, which is derived from the carboxyl end of the proenzyme. The post-translation cleavage follows an unusual pathway, termed non-hydrolytic serinolysis, in which the side chain hydroxyl group of the serine supplies its oxygen atom to form the C-terminus of the beta chain, while the remainder of the serine residue undergoes an oxidative deamination to produce ammonia and the pyruvoyl group blocking the N-terminus of the alpha chain.</text>
</comment>
<comment type="similarity">
    <text evidence="1">Belongs to the prokaryotic AdoMetDC family. Type 1 subfamily.</text>
</comment>
<protein>
    <recommendedName>
        <fullName evidence="1">S-adenosylmethionine decarboxylase proenzyme</fullName>
        <shortName evidence="1">AdoMetDC</shortName>
        <shortName evidence="1">SAMDC</shortName>
        <ecNumber evidence="1">4.1.1.50</ecNumber>
    </recommendedName>
    <component>
        <recommendedName>
            <fullName evidence="1">S-adenosylmethionine decarboxylase beta chain</fullName>
        </recommendedName>
    </component>
    <component>
        <recommendedName>
            <fullName evidence="1">S-adenosylmethionine decarboxylase alpha chain</fullName>
        </recommendedName>
    </component>
</protein>